<dbReference type="EC" id="1.2.1.41" evidence="1"/>
<dbReference type="EMBL" id="CP000301">
    <property type="protein sequence ID" value="ABD85736.1"/>
    <property type="molecule type" value="Genomic_DNA"/>
</dbReference>
<dbReference type="SMR" id="Q21D00"/>
<dbReference type="STRING" id="316056.RPC_0161"/>
<dbReference type="KEGG" id="rpc:RPC_0161"/>
<dbReference type="eggNOG" id="COG0014">
    <property type="taxonomic scope" value="Bacteria"/>
</dbReference>
<dbReference type="HOGENOM" id="CLU_030231_0_0_5"/>
<dbReference type="OrthoDB" id="9809970at2"/>
<dbReference type="UniPathway" id="UPA00098">
    <property type="reaction ID" value="UER00360"/>
</dbReference>
<dbReference type="GO" id="GO:0005737">
    <property type="term" value="C:cytoplasm"/>
    <property type="evidence" value="ECO:0007669"/>
    <property type="project" value="UniProtKB-SubCell"/>
</dbReference>
<dbReference type="GO" id="GO:0004350">
    <property type="term" value="F:glutamate-5-semialdehyde dehydrogenase activity"/>
    <property type="evidence" value="ECO:0007669"/>
    <property type="project" value="UniProtKB-UniRule"/>
</dbReference>
<dbReference type="GO" id="GO:0050661">
    <property type="term" value="F:NADP binding"/>
    <property type="evidence" value="ECO:0007669"/>
    <property type="project" value="InterPro"/>
</dbReference>
<dbReference type="GO" id="GO:0055129">
    <property type="term" value="P:L-proline biosynthetic process"/>
    <property type="evidence" value="ECO:0007669"/>
    <property type="project" value="UniProtKB-UniRule"/>
</dbReference>
<dbReference type="CDD" id="cd07079">
    <property type="entry name" value="ALDH_F18-19_ProA-GPR"/>
    <property type="match status" value="1"/>
</dbReference>
<dbReference type="FunFam" id="3.40.309.10:FF:000006">
    <property type="entry name" value="Gamma-glutamyl phosphate reductase"/>
    <property type="match status" value="1"/>
</dbReference>
<dbReference type="Gene3D" id="3.40.605.10">
    <property type="entry name" value="Aldehyde Dehydrogenase, Chain A, domain 1"/>
    <property type="match status" value="1"/>
</dbReference>
<dbReference type="Gene3D" id="3.40.309.10">
    <property type="entry name" value="Aldehyde Dehydrogenase, Chain A, domain 2"/>
    <property type="match status" value="1"/>
</dbReference>
<dbReference type="HAMAP" id="MF_00412">
    <property type="entry name" value="ProA"/>
    <property type="match status" value="1"/>
</dbReference>
<dbReference type="InterPro" id="IPR016161">
    <property type="entry name" value="Ald_DH/histidinol_DH"/>
</dbReference>
<dbReference type="InterPro" id="IPR016163">
    <property type="entry name" value="Ald_DH_C"/>
</dbReference>
<dbReference type="InterPro" id="IPR016162">
    <property type="entry name" value="Ald_DH_N"/>
</dbReference>
<dbReference type="InterPro" id="IPR015590">
    <property type="entry name" value="Aldehyde_DH_dom"/>
</dbReference>
<dbReference type="InterPro" id="IPR020593">
    <property type="entry name" value="G-glutamylP_reductase_CS"/>
</dbReference>
<dbReference type="InterPro" id="IPR012134">
    <property type="entry name" value="Glu-5-SA_DH"/>
</dbReference>
<dbReference type="InterPro" id="IPR000965">
    <property type="entry name" value="GPR_dom"/>
</dbReference>
<dbReference type="NCBIfam" id="NF001221">
    <property type="entry name" value="PRK00197.1"/>
    <property type="match status" value="1"/>
</dbReference>
<dbReference type="NCBIfam" id="TIGR00407">
    <property type="entry name" value="proA"/>
    <property type="match status" value="1"/>
</dbReference>
<dbReference type="PANTHER" id="PTHR11063:SF8">
    <property type="entry name" value="DELTA-1-PYRROLINE-5-CARBOXYLATE SYNTHASE"/>
    <property type="match status" value="1"/>
</dbReference>
<dbReference type="PANTHER" id="PTHR11063">
    <property type="entry name" value="GLUTAMATE SEMIALDEHYDE DEHYDROGENASE"/>
    <property type="match status" value="1"/>
</dbReference>
<dbReference type="Pfam" id="PF00171">
    <property type="entry name" value="Aldedh"/>
    <property type="match status" value="1"/>
</dbReference>
<dbReference type="PIRSF" id="PIRSF000151">
    <property type="entry name" value="GPR"/>
    <property type="match status" value="1"/>
</dbReference>
<dbReference type="SUPFAM" id="SSF53720">
    <property type="entry name" value="ALDH-like"/>
    <property type="match status" value="1"/>
</dbReference>
<dbReference type="PROSITE" id="PS01223">
    <property type="entry name" value="PROA"/>
    <property type="match status" value="1"/>
</dbReference>
<keyword id="KW-0028">Amino-acid biosynthesis</keyword>
<keyword id="KW-0963">Cytoplasm</keyword>
<keyword id="KW-0521">NADP</keyword>
<keyword id="KW-0560">Oxidoreductase</keyword>
<keyword id="KW-0641">Proline biosynthesis</keyword>
<protein>
    <recommendedName>
        <fullName evidence="1">Gamma-glutamyl phosphate reductase</fullName>
        <shortName evidence="1">GPR</shortName>
        <ecNumber evidence="1">1.2.1.41</ecNumber>
    </recommendedName>
    <alternativeName>
        <fullName evidence="1">Glutamate-5-semialdehyde dehydrogenase</fullName>
    </alternativeName>
    <alternativeName>
        <fullName evidence="1">Glutamyl-gamma-semialdehyde dehydrogenase</fullName>
        <shortName evidence="1">GSA dehydrogenase</shortName>
    </alternativeName>
</protein>
<gene>
    <name evidence="1" type="primary">proA</name>
    <name type="ordered locus">RPC_0161</name>
</gene>
<sequence>MTASLKAIDGAADPGAELAAMMTALGAQARAAARVLAIAPTAQKNEALAAMERAIRAHTPAILQANAEDVAEARAGGATDAFIDRLTLTEARVAVMADGIGVIHDIADPVGQVTERWQRPNGMTIERVRVPLGVIAVIFESRPNVAADAGVLALKSGNAVILRGGSDSFRSCRAIHDCLVEGLREAGLPEAAITRVPVRDRAAVGLLLGGLDGNVDVIVPRGGKSLVARVEAEARVPVFAHLEGINHVYVDRAADLDMAKSIVLNAKMRRPGVCGAAETLLIDRAAASNLAPLVTTLLEAGCEVRGDDAVQRVDPRVKPVAEEDWDTEYEAAIMSVKLVDGVDAALAHIAQHGSHHTEAIVTADQSVASKFLNEVDAAIVLHNASTQFADGGEFGFGAEIGIATGKFHARGPVGAEQLTSFKYRVHGTGQIRP</sequence>
<organism>
    <name type="scientific">Rhodopseudomonas palustris (strain BisB18)</name>
    <dbReference type="NCBI Taxonomy" id="316056"/>
    <lineage>
        <taxon>Bacteria</taxon>
        <taxon>Pseudomonadati</taxon>
        <taxon>Pseudomonadota</taxon>
        <taxon>Alphaproteobacteria</taxon>
        <taxon>Hyphomicrobiales</taxon>
        <taxon>Nitrobacteraceae</taxon>
        <taxon>Rhodopseudomonas</taxon>
    </lineage>
</organism>
<proteinExistence type="inferred from homology"/>
<reference key="1">
    <citation type="submission" date="2006-03" db="EMBL/GenBank/DDBJ databases">
        <title>Complete sequence of Rhodopseudomonas palustris BisB18.</title>
        <authorList>
            <consortium name="US DOE Joint Genome Institute"/>
            <person name="Copeland A."/>
            <person name="Lucas S."/>
            <person name="Lapidus A."/>
            <person name="Barry K."/>
            <person name="Detter J.C."/>
            <person name="Glavina del Rio T."/>
            <person name="Hammon N."/>
            <person name="Israni S."/>
            <person name="Dalin E."/>
            <person name="Tice H."/>
            <person name="Pitluck S."/>
            <person name="Chain P."/>
            <person name="Malfatti S."/>
            <person name="Shin M."/>
            <person name="Vergez L."/>
            <person name="Schmutz J."/>
            <person name="Larimer F."/>
            <person name="Land M."/>
            <person name="Hauser L."/>
            <person name="Pelletier D.A."/>
            <person name="Kyrpides N."/>
            <person name="Anderson I."/>
            <person name="Oda Y."/>
            <person name="Harwood C.S."/>
            <person name="Richardson P."/>
        </authorList>
    </citation>
    <scope>NUCLEOTIDE SEQUENCE [LARGE SCALE GENOMIC DNA]</scope>
    <source>
        <strain>BisB18</strain>
    </source>
</reference>
<feature type="chain" id="PRO_0000252588" description="Gamma-glutamyl phosphate reductase">
    <location>
        <begin position="1"/>
        <end position="433"/>
    </location>
</feature>
<accession>Q21D00</accession>
<evidence type="ECO:0000255" key="1">
    <source>
        <dbReference type="HAMAP-Rule" id="MF_00412"/>
    </source>
</evidence>
<comment type="function">
    <text evidence="1">Catalyzes the NADPH-dependent reduction of L-glutamate 5-phosphate into L-glutamate 5-semialdehyde and phosphate. The product spontaneously undergoes cyclization to form 1-pyrroline-5-carboxylate.</text>
</comment>
<comment type="catalytic activity">
    <reaction evidence="1">
        <text>L-glutamate 5-semialdehyde + phosphate + NADP(+) = L-glutamyl 5-phosphate + NADPH + H(+)</text>
        <dbReference type="Rhea" id="RHEA:19541"/>
        <dbReference type="ChEBI" id="CHEBI:15378"/>
        <dbReference type="ChEBI" id="CHEBI:43474"/>
        <dbReference type="ChEBI" id="CHEBI:57783"/>
        <dbReference type="ChEBI" id="CHEBI:58066"/>
        <dbReference type="ChEBI" id="CHEBI:58274"/>
        <dbReference type="ChEBI" id="CHEBI:58349"/>
        <dbReference type="EC" id="1.2.1.41"/>
    </reaction>
</comment>
<comment type="pathway">
    <text evidence="1">Amino-acid biosynthesis; L-proline biosynthesis; L-glutamate 5-semialdehyde from L-glutamate: step 2/2.</text>
</comment>
<comment type="subcellular location">
    <subcellularLocation>
        <location evidence="1">Cytoplasm</location>
    </subcellularLocation>
</comment>
<comment type="similarity">
    <text evidence="1">Belongs to the gamma-glutamyl phosphate reductase family.</text>
</comment>
<name>PROA_RHOPB</name>